<keyword id="KW-0378">Hydrolase</keyword>
<keyword id="KW-0414">Isoprene biosynthesis</keyword>
<keyword id="KW-0460">Magnesium</keyword>
<keyword id="KW-0479">Metal-binding</keyword>
<protein>
    <recommendedName>
        <fullName evidence="3">Terpene synthase</fullName>
        <shortName evidence="3">EoTPS</shortName>
        <ecNumber evidence="2">3.1.7.11</ecNumber>
    </recommendedName>
</protein>
<accession>A0A7D0AGU9</accession>
<proteinExistence type="evidence at transcript level"/>
<comment type="function">
    <text evidence="2">Terpene synthase that is able to convert geraniol diphosphate to geraniol in tea leaves.</text>
</comment>
<comment type="catalytic activity">
    <reaction evidence="2">
        <text>(2E)-geranyl diphosphate + H2O = (2E)-geraniol + diphosphate</text>
        <dbReference type="Rhea" id="RHEA:32679"/>
        <dbReference type="ChEBI" id="CHEBI:15377"/>
        <dbReference type="ChEBI" id="CHEBI:17447"/>
        <dbReference type="ChEBI" id="CHEBI:33019"/>
        <dbReference type="ChEBI" id="CHEBI:58057"/>
        <dbReference type="EC" id="3.1.7.11"/>
    </reaction>
</comment>
<comment type="cofactor">
    <cofactor evidence="1">
        <name>Mg(2+)</name>
        <dbReference type="ChEBI" id="CHEBI:18420"/>
    </cofactor>
    <text evidence="1">Binds 2 Mg(2+) ions per subunit.</text>
</comment>
<comment type="domain">
    <text evidence="4">The Asp-Asp-Xaa-Xaa-Asp/Glu (DDXXD/E) motif is important for the catalytic activity, presumably through binding to Mg(2+).</text>
</comment>
<comment type="similarity">
    <text evidence="4">Belongs to the FPP/GGPP synthase family.</text>
</comment>
<dbReference type="EC" id="3.1.7.11" evidence="2"/>
<dbReference type="EMBL" id="MH383159">
    <property type="protein sequence ID" value="QAX24808.1"/>
    <property type="molecule type" value="mRNA"/>
</dbReference>
<dbReference type="SMR" id="A0A7D0AGU9"/>
<dbReference type="GO" id="GO:0016787">
    <property type="term" value="F:hydrolase activity"/>
    <property type="evidence" value="ECO:0007669"/>
    <property type="project" value="UniProtKB-KW"/>
</dbReference>
<dbReference type="GO" id="GO:0046872">
    <property type="term" value="F:metal ion binding"/>
    <property type="evidence" value="ECO:0007669"/>
    <property type="project" value="UniProtKB-KW"/>
</dbReference>
<dbReference type="GO" id="GO:0004659">
    <property type="term" value="F:prenyltransferase activity"/>
    <property type="evidence" value="ECO:0007669"/>
    <property type="project" value="InterPro"/>
</dbReference>
<dbReference type="GO" id="GO:0008299">
    <property type="term" value="P:isoprenoid biosynthetic process"/>
    <property type="evidence" value="ECO:0007669"/>
    <property type="project" value="UniProtKB-KW"/>
</dbReference>
<dbReference type="GO" id="GO:0042811">
    <property type="term" value="P:pheromone biosynthetic process"/>
    <property type="evidence" value="ECO:0007669"/>
    <property type="project" value="UniProtKB-ARBA"/>
</dbReference>
<dbReference type="CDD" id="cd00685">
    <property type="entry name" value="Trans_IPPS_HT"/>
    <property type="match status" value="1"/>
</dbReference>
<dbReference type="FunFam" id="1.10.600.10:FF:000009">
    <property type="entry name" value="Geranylgeranyl pyrophosphate synthase"/>
    <property type="match status" value="1"/>
</dbReference>
<dbReference type="Gene3D" id="1.10.600.10">
    <property type="entry name" value="Farnesyl Diphosphate Synthase"/>
    <property type="match status" value="1"/>
</dbReference>
<dbReference type="InterPro" id="IPR008949">
    <property type="entry name" value="Isoprenoid_synthase_dom_sf"/>
</dbReference>
<dbReference type="InterPro" id="IPR000092">
    <property type="entry name" value="Polyprenyl_synt"/>
</dbReference>
<dbReference type="InterPro" id="IPR033749">
    <property type="entry name" value="Polyprenyl_synt_CS"/>
</dbReference>
<dbReference type="PANTHER" id="PTHR12001">
    <property type="entry name" value="GERANYLGERANYL PYROPHOSPHATE SYNTHASE"/>
    <property type="match status" value="1"/>
</dbReference>
<dbReference type="PANTHER" id="PTHR12001:SF44">
    <property type="entry name" value="GERANYLGERANYL PYROPHOSPHATE SYNTHASE"/>
    <property type="match status" value="1"/>
</dbReference>
<dbReference type="Pfam" id="PF00348">
    <property type="entry name" value="polyprenyl_synt"/>
    <property type="match status" value="1"/>
</dbReference>
<dbReference type="SFLD" id="SFLDS00005">
    <property type="entry name" value="Isoprenoid_Synthase_Type_I"/>
    <property type="match status" value="1"/>
</dbReference>
<dbReference type="SUPFAM" id="SSF48576">
    <property type="entry name" value="Terpenoid synthases"/>
    <property type="match status" value="1"/>
</dbReference>
<dbReference type="PROSITE" id="PS00723">
    <property type="entry name" value="POLYPRENYL_SYNTHASE_1"/>
    <property type="match status" value="1"/>
</dbReference>
<dbReference type="PROSITE" id="PS00444">
    <property type="entry name" value="POLYPRENYL_SYNTHASE_2"/>
    <property type="match status" value="1"/>
</dbReference>
<name>TPS_MATON</name>
<feature type="chain" id="PRO_0000455291" description="Terpene synthase">
    <location>
        <begin position="1"/>
        <end position="303"/>
    </location>
</feature>
<feature type="short sequence motif" description="DDXXD motif" evidence="4">
    <location>
        <begin position="69"/>
        <end position="73"/>
    </location>
</feature>
<feature type="binding site" evidence="1">
    <location>
        <position position="69"/>
    </location>
    <ligand>
        <name>Mg(2+)</name>
        <dbReference type="ChEBI" id="CHEBI:18420"/>
        <label>1</label>
    </ligand>
</feature>
<feature type="binding site" evidence="1">
    <location>
        <position position="69"/>
    </location>
    <ligand>
        <name>Mg(2+)</name>
        <dbReference type="ChEBI" id="CHEBI:18420"/>
        <label>2</label>
    </ligand>
</feature>
<feature type="binding site" evidence="1">
    <location>
        <position position="73"/>
    </location>
    <ligand>
        <name>Mg(2+)</name>
        <dbReference type="ChEBI" id="CHEBI:18420"/>
        <label>1</label>
    </ligand>
</feature>
<feature type="binding site" evidence="1">
    <location>
        <position position="73"/>
    </location>
    <ligand>
        <name>Mg(2+)</name>
        <dbReference type="ChEBI" id="CHEBI:18420"/>
        <label>2</label>
    </ligand>
</feature>
<organism>
    <name type="scientific">Matsumurasca onukii</name>
    <name type="common">Tea green leafhopper</name>
    <name type="synonym">Empoasca onukii</name>
    <dbReference type="NCBI Taxonomy" id="2912585"/>
    <lineage>
        <taxon>Eukaryota</taxon>
        <taxon>Metazoa</taxon>
        <taxon>Ecdysozoa</taxon>
        <taxon>Arthropoda</taxon>
        <taxon>Hexapoda</taxon>
        <taxon>Insecta</taxon>
        <taxon>Pterygota</taxon>
        <taxon>Neoptera</taxon>
        <taxon>Paraneoptera</taxon>
        <taxon>Hemiptera</taxon>
        <taxon>Auchenorrhyncha</taxon>
        <taxon>Membracoidea</taxon>
        <taxon>Cicadellidae</taxon>
        <taxon>Typhlocybinae</taxon>
        <taxon>Empoascini</taxon>
        <taxon>Matsumurasca</taxon>
    </lineage>
</organism>
<sequence>MEGLVNNSGDKDLDEKLLQPFTYILQVPGKQIRAKLAHAFNYWLKIPNDKLNIVGEIIQMLHNSSLLIDDIQDNSILRRGIPVAHSIYGVASTINAANYVIFLAVEKVLRLEHPEATRVCIDQLLELHRGQGIEIYWRDNFQCPSEDEYKLMTIRKTGGLFMLAIRLMQLFSESDADFTKLAGILGLYFQIRDDYCNLCLQEYSENKSFCEDLTEGKFSFPIIHAIRSRPDDRQVIQILRQRTRDVEVKKYCVTLLEKFGSFSHTRETLAQLDREAREEVARLGGNPFLEAILNDLLNWDRTK</sequence>
<gene>
    <name evidence="3" type="primary">TPS</name>
</gene>
<reference key="1">
    <citation type="journal article" date="2019" name="Biomolecules">
        <title>Characterization of terpene synthase from tea green leafhopper being involved in formation of geraniol in tea (camellia sinensis) leaves and potential effect of geraniol on insect-derived endobacteria.</title>
        <authorList>
            <person name="Zhou Y."/>
            <person name="Liu X."/>
            <person name="Yang Z."/>
        </authorList>
    </citation>
    <scope>NUCLEOTIDE SEQUENCE [MRNA]</scope>
</reference>
<evidence type="ECO:0000250" key="1">
    <source>
        <dbReference type="UniProtKB" id="P14324"/>
    </source>
</evidence>
<evidence type="ECO:0000269" key="2">
    <source>
    </source>
</evidence>
<evidence type="ECO:0000303" key="3">
    <source>
    </source>
</evidence>
<evidence type="ECO:0000305" key="4"/>